<protein>
    <recommendedName>
        <fullName>Aspartic proteinase nepenthesin-1</fullName>
        <ecNumber>3.4.23.12</ecNumber>
    </recommendedName>
    <alternativeName>
        <fullName>Nepenthesin-I</fullName>
    </alternativeName>
</protein>
<organism>
    <name type="scientific">Nepenthes distillatoria</name>
    <name type="common">Pitcher plant</name>
    <dbReference type="NCBI Taxonomy" id="122309"/>
    <lineage>
        <taxon>Eukaryota</taxon>
        <taxon>Viridiplantae</taxon>
        <taxon>Streptophyta</taxon>
        <taxon>Embryophyta</taxon>
        <taxon>Tracheophyta</taxon>
        <taxon>Spermatophyta</taxon>
        <taxon>Magnoliopsida</taxon>
        <taxon>eudicotyledons</taxon>
        <taxon>Gunneridae</taxon>
        <taxon>Pentapetalae</taxon>
        <taxon>Caryophyllales</taxon>
        <taxon>Nepenthaceae</taxon>
        <taxon>Nepenthes</taxon>
    </lineage>
</organism>
<keyword id="KW-0064">Aspartyl protease</keyword>
<keyword id="KW-0903">Direct protein sequencing</keyword>
<keyword id="KW-0325">Glycoprotein</keyword>
<keyword id="KW-0378">Hydrolase</keyword>
<keyword id="KW-0645">Protease</keyword>
<keyword id="KW-0964">Secreted</keyword>
<keyword id="KW-0865">Zymogen</keyword>
<proteinExistence type="evidence at protein level"/>
<comment type="function">
    <text>Extracellular proteinase found in the pitcher fluid of carnivorous plants. Digest prey for nitrogen uptake.</text>
</comment>
<comment type="catalytic activity">
    <reaction>
        <text>Similar to pepsin, but also cleaves on either side of Asp and at Lys-|-Arg.</text>
        <dbReference type="EC" id="3.4.23.12"/>
    </reaction>
</comment>
<comment type="activity regulation">
    <text>Inhibited by pepstatin and by diazoacetyl-D,L-norleucine methyl ester (DAN) in the presence of Cu(2+) ions.</text>
</comment>
<comment type="biophysicochemical properties">
    <phDependence>
        <text>Optimum pH is 2.6. Retains 95% and 79% of the original activity after incubation for 30 days at pH 3.0 and pH 10.0 respectively.</text>
    </phDependence>
    <temperatureDependence>
        <text>Optimum temperature is 55 degrees Celsius. Thermostable up to 50 degrees Celsius. Retains 60% of the original activity after incubation for 30 days at 50 degrees Celsius.</text>
    </temperatureDependence>
</comment>
<comment type="subcellular location">
    <subcellularLocation>
        <location evidence="4">Secreted</location>
    </subcellularLocation>
</comment>
<comment type="tissue specificity">
    <text evidence="4">Parenchymal cells surrounding the secretory glands.</text>
</comment>
<comment type="similarity">
    <text evidence="5">Belongs to the peptidase A1 family.</text>
</comment>
<feature type="chain" id="PRO_0000199513" description="Aspartic proteinase nepenthesin-1">
    <location>
        <begin position="1"/>
        <end position="164" status="greater than"/>
    </location>
</feature>
<feature type="domain" description="Peptidase A1" evidence="2">
    <location>
        <begin position="17"/>
        <end position="164" status="greater than"/>
    </location>
</feature>
<feature type="active site" evidence="3">
    <location>
        <position position="35"/>
    </location>
</feature>
<feature type="glycosylation site" description="N-linked (GlcNAc...) asparagine" evidence="1">
    <location>
        <position position="93"/>
    </location>
</feature>
<feature type="sequence variant" evidence="4">
    <original>S</original>
    <variation>Y</variation>
    <location>
        <position position="31"/>
    </location>
</feature>
<feature type="non-consecutive residues" evidence="5">
    <location>
        <begin position="55"/>
        <end position="56"/>
    </location>
</feature>
<feature type="non-consecutive residues" evidence="5">
    <location>
        <begin position="72"/>
        <end position="73"/>
    </location>
</feature>
<feature type="non-consecutive residues" evidence="5">
    <location>
        <begin position="100"/>
        <end position="101"/>
    </location>
</feature>
<feature type="non-consecutive residues" evidence="5">
    <location>
        <begin position="113"/>
        <end position="114"/>
    </location>
</feature>
<feature type="non-consecutive residues" evidence="5">
    <location>
        <begin position="118"/>
        <end position="119"/>
    </location>
</feature>
<feature type="non-consecutive residues" evidence="5">
    <location>
        <begin position="126"/>
        <end position="127"/>
    </location>
</feature>
<feature type="non-consecutive residues" evidence="5">
    <location>
        <begin position="148"/>
        <end position="149"/>
    </location>
</feature>
<feature type="non-terminal residue">
    <location>
        <position position="164"/>
    </location>
</feature>
<reference key="1">
    <citation type="journal article" date="2004" name="Biochem. J.">
        <title>Enzymic and structural characterization of nepenthesin, a unique member of a novel subfamily of aspartic proteinases.</title>
        <authorList>
            <person name="Athauda S.B.P."/>
            <person name="Matsumoto K."/>
            <person name="Rajapakshe S."/>
            <person name="Kuribayashi M."/>
            <person name="Kojima M."/>
            <person name="Kubomura-Yoshida N."/>
            <person name="Iwamatsu A."/>
            <person name="Shibata C."/>
            <person name="Inoue H."/>
            <person name="Takahashi K."/>
        </authorList>
    </citation>
    <scope>PARTIAL PROTEIN SEQUENCE</scope>
    <scope>CHARACTERIZATION</scope>
    <scope>TISSUE SPECIFICITY</scope>
    <scope>SUBCELLULAR LOCATION</scope>
    <scope>VARIANT TYR-31</scope>
    <source>
        <tissue>Pitcher</tissue>
    </source>
</reference>
<evidence type="ECO:0000255" key="1"/>
<evidence type="ECO:0000255" key="2">
    <source>
        <dbReference type="PROSITE-ProRule" id="PRU01103"/>
    </source>
</evidence>
<evidence type="ECO:0000255" key="3">
    <source>
        <dbReference type="PROSITE-ProRule" id="PRU10094"/>
    </source>
</evidence>
<evidence type="ECO:0000269" key="4">
    <source>
    </source>
</evidence>
<evidence type="ECO:0000305" key="5"/>
<sequence>IGPSGVETTVYAGDGEYLMXLSIGTPAQPFSAIMDTGSDLIWTQXQPXTQXFXQSDPQGSSSFSTLPCGYGDSETQGSMGTETFTFGSVSIPNITFGXGEGPLPLPXQLDVAKYITLDLPIDPSAFDLCFQTPSDPSNLQIPTFVMHFDTGNSVVSFVSAQCGA</sequence>
<dbReference type="EC" id="3.4.23.12"/>
<dbReference type="MEROPS" id="A01.A47"/>
<dbReference type="GO" id="GO:0005576">
    <property type="term" value="C:extracellular region"/>
    <property type="evidence" value="ECO:0007669"/>
    <property type="project" value="UniProtKB-SubCell"/>
</dbReference>
<dbReference type="GO" id="GO:0004190">
    <property type="term" value="F:aspartic-type endopeptidase activity"/>
    <property type="evidence" value="ECO:0007669"/>
    <property type="project" value="UniProtKB-KW"/>
</dbReference>
<dbReference type="GO" id="GO:0006508">
    <property type="term" value="P:proteolysis"/>
    <property type="evidence" value="ECO:0007669"/>
    <property type="project" value="UniProtKB-KW"/>
</dbReference>
<dbReference type="Gene3D" id="2.40.70.10">
    <property type="entry name" value="Acid Proteases"/>
    <property type="match status" value="1"/>
</dbReference>
<dbReference type="InterPro" id="IPR033121">
    <property type="entry name" value="PEPTIDASE_A1"/>
</dbReference>
<dbReference type="InterPro" id="IPR021109">
    <property type="entry name" value="Peptidase_aspartic_dom_sf"/>
</dbReference>
<dbReference type="InterPro" id="IPR051708">
    <property type="entry name" value="Plant_Aspart_Prot_A1"/>
</dbReference>
<dbReference type="InterPro" id="IPR032861">
    <property type="entry name" value="TAXi_N"/>
</dbReference>
<dbReference type="PANTHER" id="PTHR47967:SF23">
    <property type="entry name" value="OS04G0448300 PROTEIN"/>
    <property type="match status" value="1"/>
</dbReference>
<dbReference type="PANTHER" id="PTHR47967">
    <property type="entry name" value="OS07G0603500 PROTEIN-RELATED"/>
    <property type="match status" value="1"/>
</dbReference>
<dbReference type="Pfam" id="PF14543">
    <property type="entry name" value="TAXi_N"/>
    <property type="match status" value="1"/>
</dbReference>
<dbReference type="SUPFAM" id="SSF50630">
    <property type="entry name" value="Acid proteases"/>
    <property type="match status" value="1"/>
</dbReference>
<dbReference type="PROSITE" id="PS51767">
    <property type="entry name" value="PEPTIDASE_A1"/>
    <property type="match status" value="1"/>
</dbReference>
<name>NEP1_NEPDI</name>
<accession>P69476</accession>